<evidence type="ECO:0000255" key="1">
    <source>
        <dbReference type="HAMAP-Rule" id="MF_00012"/>
    </source>
</evidence>
<feature type="chain" id="PRO_1000000982" description="Dihydroxy-acid dehydratase">
    <location>
        <begin position="1"/>
        <end position="616"/>
    </location>
</feature>
<feature type="active site" description="Proton acceptor" evidence="1">
    <location>
        <position position="517"/>
    </location>
</feature>
<feature type="binding site" evidence="1">
    <location>
        <position position="81"/>
    </location>
    <ligand>
        <name>Mg(2+)</name>
        <dbReference type="ChEBI" id="CHEBI:18420"/>
    </ligand>
</feature>
<feature type="binding site" evidence="1">
    <location>
        <position position="122"/>
    </location>
    <ligand>
        <name>[2Fe-2S] cluster</name>
        <dbReference type="ChEBI" id="CHEBI:190135"/>
    </ligand>
</feature>
<feature type="binding site" evidence="1">
    <location>
        <position position="123"/>
    </location>
    <ligand>
        <name>Mg(2+)</name>
        <dbReference type="ChEBI" id="CHEBI:18420"/>
    </ligand>
</feature>
<feature type="binding site" description="via carbamate group" evidence="1">
    <location>
        <position position="124"/>
    </location>
    <ligand>
        <name>Mg(2+)</name>
        <dbReference type="ChEBI" id="CHEBI:18420"/>
    </ligand>
</feature>
<feature type="binding site" evidence="1">
    <location>
        <position position="195"/>
    </location>
    <ligand>
        <name>[2Fe-2S] cluster</name>
        <dbReference type="ChEBI" id="CHEBI:190135"/>
    </ligand>
</feature>
<feature type="binding site" evidence="1">
    <location>
        <position position="491"/>
    </location>
    <ligand>
        <name>Mg(2+)</name>
        <dbReference type="ChEBI" id="CHEBI:18420"/>
    </ligand>
</feature>
<feature type="modified residue" description="N6-carboxylysine" evidence="1">
    <location>
        <position position="124"/>
    </location>
</feature>
<protein>
    <recommendedName>
        <fullName evidence="1">Dihydroxy-acid dehydratase</fullName>
        <shortName evidence="1">DAD</shortName>
        <ecNumber evidence="1">4.2.1.9</ecNumber>
    </recommendedName>
</protein>
<sequence>MPKYRSATTTHGRNMAGARALWRATGMTDADFGKPIIAVVNSFTQFVPGHVHLRDLGKLVAEQIEAAGGVAKEFNTIAVDDGIAMGHGGMLYSLPSRELIADSVEYMVNAHCADAMVCISNCDKITPGMLMASLRLNIPVIFVSGGPMEAGKTKLSDQIIKLDLVDAMIQGADPKVSDSQSDQVERSACPTCGSCSGMFTANSMNCLTEALGLSQPGNGSLLATHADRKQLFLNAGKRIVELTKRYYEQDDESALPRNIASKAAFENAMTLDIAMGGSTNTVLHLLAAAQEAEIDFTMSDIDKLSRKVPQLCKVAPSTQKYHMEDVHRAGGVIGILGELDRAGLLNRDVKNVLGLTLPQTLEQYDIIVTQDDAVKNMFRAGPAGIRTTQAFSQDCRWDTLDDDRSNGCIRSLEHAYSKDGGLAVLYGNFAENGCIVKTAGVDDSILKFTGPAKVYESQDDAVEAILGGKVVAGDVVVIRYEGPKGGPGMQEMLYPTSFLKSMGLGKACALITDGRFSGGTSGLSIGHVSPEAASGGSIGLIEDGDLIAIDIPNRGIQLQVSDAELAARREAQEARGDKAWTPKNRERQVSFALRAYASLATSADKGAVRDKSKLGG</sequence>
<keyword id="KW-0001">2Fe-2S</keyword>
<keyword id="KW-0028">Amino-acid biosynthesis</keyword>
<keyword id="KW-0100">Branched-chain amino acid biosynthesis</keyword>
<keyword id="KW-0408">Iron</keyword>
<keyword id="KW-0411">Iron-sulfur</keyword>
<keyword id="KW-0456">Lyase</keyword>
<keyword id="KW-0460">Magnesium</keyword>
<keyword id="KW-0479">Metal-binding</keyword>
<comment type="function">
    <text evidence="1">Functions in the biosynthesis of branched-chain amino acids. Catalyzes the dehydration of (2R,3R)-2,3-dihydroxy-3-methylpentanoate (2,3-dihydroxy-3-methylvalerate) into 2-oxo-3-methylpentanoate (2-oxo-3-methylvalerate) and of (2R)-2,3-dihydroxy-3-methylbutanoate (2,3-dihydroxyisovalerate) into 2-oxo-3-methylbutanoate (2-oxoisovalerate), the penultimate precursor to L-isoleucine and L-valine, respectively.</text>
</comment>
<comment type="catalytic activity">
    <reaction evidence="1">
        <text>(2R)-2,3-dihydroxy-3-methylbutanoate = 3-methyl-2-oxobutanoate + H2O</text>
        <dbReference type="Rhea" id="RHEA:24809"/>
        <dbReference type="ChEBI" id="CHEBI:11851"/>
        <dbReference type="ChEBI" id="CHEBI:15377"/>
        <dbReference type="ChEBI" id="CHEBI:49072"/>
        <dbReference type="EC" id="4.2.1.9"/>
    </reaction>
    <physiologicalReaction direction="left-to-right" evidence="1">
        <dbReference type="Rhea" id="RHEA:24810"/>
    </physiologicalReaction>
</comment>
<comment type="catalytic activity">
    <reaction evidence="1">
        <text>(2R,3R)-2,3-dihydroxy-3-methylpentanoate = (S)-3-methyl-2-oxopentanoate + H2O</text>
        <dbReference type="Rhea" id="RHEA:27694"/>
        <dbReference type="ChEBI" id="CHEBI:15377"/>
        <dbReference type="ChEBI" id="CHEBI:35146"/>
        <dbReference type="ChEBI" id="CHEBI:49258"/>
        <dbReference type="EC" id="4.2.1.9"/>
    </reaction>
    <physiologicalReaction direction="left-to-right" evidence="1">
        <dbReference type="Rhea" id="RHEA:27695"/>
    </physiologicalReaction>
</comment>
<comment type="cofactor">
    <cofactor evidence="1">
        <name>[2Fe-2S] cluster</name>
        <dbReference type="ChEBI" id="CHEBI:190135"/>
    </cofactor>
    <text evidence="1">Binds 1 [2Fe-2S] cluster per subunit. This cluster acts as a Lewis acid cofactor.</text>
</comment>
<comment type="cofactor">
    <cofactor evidence="1">
        <name>Mg(2+)</name>
        <dbReference type="ChEBI" id="CHEBI:18420"/>
    </cofactor>
</comment>
<comment type="pathway">
    <text evidence="1">Amino-acid biosynthesis; L-isoleucine biosynthesis; L-isoleucine from 2-oxobutanoate: step 3/4.</text>
</comment>
<comment type="pathway">
    <text evidence="1">Amino-acid biosynthesis; L-valine biosynthesis; L-valine from pyruvate: step 3/4.</text>
</comment>
<comment type="subunit">
    <text evidence="1">Homodimer.</text>
</comment>
<comment type="similarity">
    <text evidence="1">Belongs to the IlvD/Edd family.</text>
</comment>
<gene>
    <name evidence="1" type="primary">ilvD</name>
    <name type="ordered locus">UTI89_C4327</name>
</gene>
<proteinExistence type="inferred from homology"/>
<dbReference type="EC" id="4.2.1.9" evidence="1"/>
<dbReference type="EMBL" id="CP000243">
    <property type="protein sequence ID" value="ABE09748.1"/>
    <property type="molecule type" value="Genomic_DNA"/>
</dbReference>
<dbReference type="RefSeq" id="WP_001127371.1">
    <property type="nucleotide sequence ID" value="NZ_CP064825.1"/>
</dbReference>
<dbReference type="SMR" id="Q1R4G6"/>
<dbReference type="KEGG" id="eci:UTI89_C4327"/>
<dbReference type="HOGENOM" id="CLU_014271_4_2_6"/>
<dbReference type="UniPathway" id="UPA00047">
    <property type="reaction ID" value="UER00057"/>
</dbReference>
<dbReference type="UniPathway" id="UPA00049">
    <property type="reaction ID" value="UER00061"/>
</dbReference>
<dbReference type="Proteomes" id="UP000001952">
    <property type="component" value="Chromosome"/>
</dbReference>
<dbReference type="GO" id="GO:0005829">
    <property type="term" value="C:cytosol"/>
    <property type="evidence" value="ECO:0007669"/>
    <property type="project" value="TreeGrafter"/>
</dbReference>
<dbReference type="GO" id="GO:0051537">
    <property type="term" value="F:2 iron, 2 sulfur cluster binding"/>
    <property type="evidence" value="ECO:0007669"/>
    <property type="project" value="UniProtKB-UniRule"/>
</dbReference>
<dbReference type="GO" id="GO:0004160">
    <property type="term" value="F:dihydroxy-acid dehydratase activity"/>
    <property type="evidence" value="ECO:0007669"/>
    <property type="project" value="UniProtKB-UniRule"/>
</dbReference>
<dbReference type="GO" id="GO:0000287">
    <property type="term" value="F:magnesium ion binding"/>
    <property type="evidence" value="ECO:0007669"/>
    <property type="project" value="UniProtKB-UniRule"/>
</dbReference>
<dbReference type="GO" id="GO:0009097">
    <property type="term" value="P:isoleucine biosynthetic process"/>
    <property type="evidence" value="ECO:0007669"/>
    <property type="project" value="UniProtKB-UniRule"/>
</dbReference>
<dbReference type="GO" id="GO:0009099">
    <property type="term" value="P:L-valine biosynthetic process"/>
    <property type="evidence" value="ECO:0007669"/>
    <property type="project" value="UniProtKB-UniRule"/>
</dbReference>
<dbReference type="FunFam" id="3.50.30.80:FF:000001">
    <property type="entry name" value="Dihydroxy-acid dehydratase"/>
    <property type="match status" value="1"/>
</dbReference>
<dbReference type="Gene3D" id="3.50.30.80">
    <property type="entry name" value="IlvD/EDD C-terminal domain-like"/>
    <property type="match status" value="1"/>
</dbReference>
<dbReference type="HAMAP" id="MF_00012">
    <property type="entry name" value="IlvD"/>
    <property type="match status" value="1"/>
</dbReference>
<dbReference type="InterPro" id="IPR042096">
    <property type="entry name" value="Dihydro-acid_dehy_C"/>
</dbReference>
<dbReference type="InterPro" id="IPR004404">
    <property type="entry name" value="DihydroxyA_deHydtase"/>
</dbReference>
<dbReference type="InterPro" id="IPR020558">
    <property type="entry name" value="DiOHA_6PGluconate_deHydtase_CS"/>
</dbReference>
<dbReference type="InterPro" id="IPR056740">
    <property type="entry name" value="ILV_EDD_C"/>
</dbReference>
<dbReference type="InterPro" id="IPR000581">
    <property type="entry name" value="ILV_EDD_N"/>
</dbReference>
<dbReference type="InterPro" id="IPR037237">
    <property type="entry name" value="IlvD/EDD_N"/>
</dbReference>
<dbReference type="NCBIfam" id="TIGR00110">
    <property type="entry name" value="ilvD"/>
    <property type="match status" value="1"/>
</dbReference>
<dbReference type="NCBIfam" id="NF009103">
    <property type="entry name" value="PRK12448.1"/>
    <property type="match status" value="1"/>
</dbReference>
<dbReference type="PANTHER" id="PTHR43661">
    <property type="entry name" value="D-XYLONATE DEHYDRATASE"/>
    <property type="match status" value="1"/>
</dbReference>
<dbReference type="PANTHER" id="PTHR43661:SF3">
    <property type="entry name" value="D-XYLONATE DEHYDRATASE YAGF-RELATED"/>
    <property type="match status" value="1"/>
</dbReference>
<dbReference type="Pfam" id="PF24877">
    <property type="entry name" value="ILV_EDD_C"/>
    <property type="match status" value="1"/>
</dbReference>
<dbReference type="Pfam" id="PF00920">
    <property type="entry name" value="ILVD_EDD_N"/>
    <property type="match status" value="1"/>
</dbReference>
<dbReference type="SUPFAM" id="SSF143975">
    <property type="entry name" value="IlvD/EDD N-terminal domain-like"/>
    <property type="match status" value="1"/>
</dbReference>
<dbReference type="SUPFAM" id="SSF52016">
    <property type="entry name" value="LeuD/IlvD-like"/>
    <property type="match status" value="1"/>
</dbReference>
<dbReference type="PROSITE" id="PS00886">
    <property type="entry name" value="ILVD_EDD_1"/>
    <property type="match status" value="1"/>
</dbReference>
<dbReference type="PROSITE" id="PS00887">
    <property type="entry name" value="ILVD_EDD_2"/>
    <property type="match status" value="1"/>
</dbReference>
<organism>
    <name type="scientific">Escherichia coli (strain UTI89 / UPEC)</name>
    <dbReference type="NCBI Taxonomy" id="364106"/>
    <lineage>
        <taxon>Bacteria</taxon>
        <taxon>Pseudomonadati</taxon>
        <taxon>Pseudomonadota</taxon>
        <taxon>Gammaproteobacteria</taxon>
        <taxon>Enterobacterales</taxon>
        <taxon>Enterobacteriaceae</taxon>
        <taxon>Escherichia</taxon>
    </lineage>
</organism>
<accession>Q1R4G6</accession>
<reference key="1">
    <citation type="journal article" date="2006" name="Proc. Natl. Acad. Sci. U.S.A.">
        <title>Identification of genes subject to positive selection in uropathogenic strains of Escherichia coli: a comparative genomics approach.</title>
        <authorList>
            <person name="Chen S.L."/>
            <person name="Hung C.-S."/>
            <person name="Xu J."/>
            <person name="Reigstad C.S."/>
            <person name="Magrini V."/>
            <person name="Sabo A."/>
            <person name="Blasiar D."/>
            <person name="Bieri T."/>
            <person name="Meyer R.R."/>
            <person name="Ozersky P."/>
            <person name="Armstrong J.R."/>
            <person name="Fulton R.S."/>
            <person name="Latreille J.P."/>
            <person name="Spieth J."/>
            <person name="Hooton T.M."/>
            <person name="Mardis E.R."/>
            <person name="Hultgren S.J."/>
            <person name="Gordon J.I."/>
        </authorList>
    </citation>
    <scope>NUCLEOTIDE SEQUENCE [LARGE SCALE GENOMIC DNA]</scope>
    <source>
        <strain>UTI89 / UPEC</strain>
    </source>
</reference>
<name>ILVD_ECOUT</name>